<reference key="1">
    <citation type="journal article" date="1995" name="Neuron">
        <title>The limbic system-associated membrane protein is an Ig superfamily member that mediates selective neuronal growth and axon targeting.</title>
        <authorList>
            <person name="Pimenta A.F."/>
            <person name="Zhukareva V."/>
            <person name="Barbe M.F."/>
            <person name="Reinoso B.S."/>
            <person name="Grimley C."/>
            <person name="Henzel W."/>
            <person name="Fischer I."/>
            <person name="Levitt P."/>
        </authorList>
    </citation>
    <scope>NUCLEOTIDE SEQUENCE [MRNA] (ISOFORM 1)</scope>
    <scope>PROTEIN SEQUENCE OF 29-49</scope>
    <source>
        <tissue>Hippocampus</tissue>
    </source>
</reference>
<reference key="2">
    <citation type="journal article" date="2004" name="Genomics">
        <title>Characterization of the genomic structure of the mouse limbic system-associated membrane protein (Lsamp) gene.</title>
        <authorList>
            <person name="Pimenta A.F."/>
            <person name="Levitt P."/>
        </authorList>
    </citation>
    <scope>NUCLEOTIDE SEQUENCE [MRNA] (ISOFORM 2)</scope>
    <source>
        <strain>Sprague-Dawley</strain>
    </source>
</reference>
<reference key="3">
    <citation type="submission" date="2007-09" db="UniProtKB">
        <authorList>
            <person name="Lubec G."/>
            <person name="Kang S.U."/>
            <person name="Lubec S."/>
        </authorList>
    </citation>
    <scope>PROTEIN SEQUENCE OF 78-83; 90-97; 167-189; 199-209 AND 213-225</scope>
    <scope>IDENTIFICATION BY MASS SPECTROMETRY</scope>
    <source>
        <strain>Sprague-Dawley</strain>
        <tissue>Brain</tissue>
    </source>
</reference>
<organism>
    <name type="scientific">Rattus norvegicus</name>
    <name type="common">Rat</name>
    <dbReference type="NCBI Taxonomy" id="10116"/>
    <lineage>
        <taxon>Eukaryota</taxon>
        <taxon>Metazoa</taxon>
        <taxon>Chordata</taxon>
        <taxon>Craniata</taxon>
        <taxon>Vertebrata</taxon>
        <taxon>Euteleostomi</taxon>
        <taxon>Mammalia</taxon>
        <taxon>Eutheria</taxon>
        <taxon>Euarchontoglires</taxon>
        <taxon>Glires</taxon>
        <taxon>Rodentia</taxon>
        <taxon>Myomorpha</taxon>
        <taxon>Muroidea</taxon>
        <taxon>Muridae</taxon>
        <taxon>Murinae</taxon>
        <taxon>Rattus</taxon>
    </lineage>
</organism>
<evidence type="ECO:0000250" key="1">
    <source>
        <dbReference type="UniProtKB" id="Q8BLK3"/>
    </source>
</evidence>
<evidence type="ECO:0000255" key="2"/>
<evidence type="ECO:0000255" key="3">
    <source>
        <dbReference type="PROSITE-ProRule" id="PRU00114"/>
    </source>
</evidence>
<evidence type="ECO:0000269" key="4">
    <source>
    </source>
</evidence>
<evidence type="ECO:0000303" key="5">
    <source>
    </source>
</evidence>
<evidence type="ECO:0000305" key="6"/>
<sequence>MVGRVQPDRKQLPLVLLRLLCLLPTGLPVRSVDFNRGTDNITVRQGDTAILRCVVEDKNSKVAWLNRSGIIFAGHDKWSLDPRVELEKRHALEYSLRIQKVDVYDEGSYTCSVQTQHEPKTSQVYLIVQVPPKISNISSDVTVNEGSNVTLVCMANGRPEPVITWRHLTPLGREFEGEEEYLEILGITREQSGKYECKAANEVSSADVKQVKVTVNYPPTITESKSNEATTGRQASLKCEASAVPAPDFEWYRDDTRINSANGLEIKSTEGQSSLTVTNVTEEHYGNYTCVAANKLGVTNASLVLFRPGSVRGINGSISLAVPLWLLAASLFCLLSKC</sequence>
<accession>Q62813</accession>
<accession>Q6VUH9</accession>
<feature type="signal peptide" evidence="4">
    <location>
        <begin position="1"/>
        <end position="28"/>
    </location>
</feature>
<feature type="chain" id="PRO_0000015106" description="Limbic system-associated membrane protein">
    <location>
        <begin position="29"/>
        <end position="315"/>
    </location>
</feature>
<feature type="propeptide" id="PRO_0000015107" description="Removed in mature form" evidence="2">
    <location>
        <begin position="316"/>
        <end position="338"/>
    </location>
</feature>
<feature type="domain" description="Ig-like C2-type 1">
    <location>
        <begin position="29"/>
        <end position="122"/>
    </location>
</feature>
<feature type="domain" description="Ig-like C2-type 2">
    <location>
        <begin position="132"/>
        <end position="214"/>
    </location>
</feature>
<feature type="domain" description="Ig-like C2-type 3">
    <location>
        <begin position="219"/>
        <end position="304"/>
    </location>
</feature>
<feature type="modified residue" description="Phosphotyrosine" evidence="1">
    <location>
        <position position="94"/>
    </location>
</feature>
<feature type="lipid moiety-binding region" description="GPI-anchor amidated asparagine; alternate" evidence="2">
    <location>
        <position position="315"/>
    </location>
</feature>
<feature type="glycosylation site" description="N-linked (GlcNAc...) asparagine" evidence="2">
    <location>
        <position position="40"/>
    </location>
</feature>
<feature type="glycosylation site" description="N-linked (GlcNAc...) asparagine" evidence="2">
    <location>
        <position position="66"/>
    </location>
</feature>
<feature type="glycosylation site" description="N-linked (GlcNAc...) asparagine" evidence="2">
    <location>
        <position position="136"/>
    </location>
</feature>
<feature type="glycosylation site" description="N-linked (GlcNAc...) asparagine" evidence="2">
    <location>
        <position position="148"/>
    </location>
</feature>
<feature type="glycosylation site" description="N-linked (GlcNAc...) asparagine" evidence="2">
    <location>
        <position position="279"/>
    </location>
</feature>
<feature type="glycosylation site" description="N-linked (GlcNAc...) asparagine" evidence="2">
    <location>
        <position position="287"/>
    </location>
</feature>
<feature type="glycosylation site" description="N-linked (GlcNAc...) asparagine" evidence="2">
    <location>
        <position position="300"/>
    </location>
</feature>
<feature type="glycosylation site" description="N-linked (GlcNAc...) asparagine; alternate" evidence="2">
    <location>
        <position position="315"/>
    </location>
</feature>
<feature type="disulfide bond" evidence="3">
    <location>
        <begin position="53"/>
        <end position="111"/>
    </location>
</feature>
<feature type="disulfide bond" evidence="3">
    <location>
        <begin position="153"/>
        <end position="197"/>
    </location>
</feature>
<feature type="disulfide bond" evidence="3">
    <location>
        <begin position="239"/>
        <end position="290"/>
    </location>
</feature>
<feature type="splice variant" id="VSP_011601" description="In isoform 2." evidence="5">
    <original>R</original>
    <variation>KRVLPTVPHPIQEIGTTVHFKQKG</variation>
    <location>
        <position position="307"/>
    </location>
</feature>
<protein>
    <recommendedName>
        <fullName>Limbic system-associated membrane protein</fullName>
        <shortName>LSAMP</shortName>
    </recommendedName>
</protein>
<gene>
    <name type="primary">Lsamp</name>
    <name type="synonym">Lamp</name>
</gene>
<dbReference type="EMBL" id="U31554">
    <property type="protein sequence ID" value="AAA86120.1"/>
    <property type="molecule type" value="mRNA"/>
</dbReference>
<dbReference type="EMBL" id="AY326256">
    <property type="protein sequence ID" value="AAQ91613.1"/>
    <property type="molecule type" value="mRNA"/>
</dbReference>
<dbReference type="RefSeq" id="NP_058938.1">
    <molecule id="Q62813-1"/>
    <property type="nucleotide sequence ID" value="NM_017242.3"/>
</dbReference>
<dbReference type="RefSeq" id="XP_006248401.1">
    <property type="nucleotide sequence ID" value="XM_006248339.3"/>
</dbReference>
<dbReference type="SMR" id="Q62813"/>
<dbReference type="BioGRID" id="248195">
    <property type="interactions" value="1"/>
</dbReference>
<dbReference type="FunCoup" id="Q62813">
    <property type="interactions" value="1363"/>
</dbReference>
<dbReference type="IntAct" id="Q62813">
    <property type="interactions" value="1"/>
</dbReference>
<dbReference type="MINT" id="Q62813"/>
<dbReference type="STRING" id="10116.ENSRNOP00000040165"/>
<dbReference type="GlyCosmos" id="Q62813">
    <property type="glycosylation" value="8 sites, 4 glycans"/>
</dbReference>
<dbReference type="GlyGen" id="Q62813">
    <property type="glycosylation" value="8 sites, 4 N-linked glycans (5 sites)"/>
</dbReference>
<dbReference type="iPTMnet" id="Q62813"/>
<dbReference type="PhosphoSitePlus" id="Q62813"/>
<dbReference type="PaxDb" id="10116-ENSRNOP00000040165"/>
<dbReference type="Ensembl" id="ENSRNOT00000047907.5">
    <molecule id="Q62813-2"/>
    <property type="protein sequence ID" value="ENSRNOP00000040165.4"/>
    <property type="gene ID" value="ENSRNOG00000031852.7"/>
</dbReference>
<dbReference type="Ensembl" id="ENSRNOT00000100246.1">
    <molecule id="Q62813-1"/>
    <property type="protein sequence ID" value="ENSRNOP00000085583.1"/>
    <property type="gene ID" value="ENSRNOG00000031852.7"/>
</dbReference>
<dbReference type="GeneID" id="29561"/>
<dbReference type="KEGG" id="rno:29561"/>
<dbReference type="UCSC" id="RGD:71102">
    <molecule id="Q62813-1"/>
    <property type="organism name" value="rat"/>
</dbReference>
<dbReference type="AGR" id="RGD:71102"/>
<dbReference type="CTD" id="4045"/>
<dbReference type="RGD" id="71102">
    <property type="gene designation" value="Lsamp"/>
</dbReference>
<dbReference type="eggNOG" id="KOG3510">
    <property type="taxonomic scope" value="Eukaryota"/>
</dbReference>
<dbReference type="GeneTree" id="ENSGT00940000158516"/>
<dbReference type="HOGENOM" id="CLU_027228_2_1_1"/>
<dbReference type="InParanoid" id="Q62813"/>
<dbReference type="OrthoDB" id="6159398at2759"/>
<dbReference type="TreeFam" id="TF325565"/>
<dbReference type="Reactome" id="R-RNO-163125">
    <property type="pathway name" value="Post-translational modification: synthesis of GPI-anchored proteins"/>
</dbReference>
<dbReference type="PRO" id="PR:Q62813"/>
<dbReference type="Proteomes" id="UP000002494">
    <property type="component" value="Chromosome 11"/>
</dbReference>
<dbReference type="GO" id="GO:0045211">
    <property type="term" value="C:postsynaptic membrane"/>
    <property type="evidence" value="ECO:0000314"/>
    <property type="project" value="SynGO"/>
</dbReference>
<dbReference type="GO" id="GO:0042734">
    <property type="term" value="C:presynaptic membrane"/>
    <property type="evidence" value="ECO:0000314"/>
    <property type="project" value="SynGO"/>
</dbReference>
<dbReference type="GO" id="GO:0098552">
    <property type="term" value="C:side of membrane"/>
    <property type="evidence" value="ECO:0007669"/>
    <property type="project" value="UniProtKB-KW"/>
</dbReference>
<dbReference type="GO" id="GO:0007155">
    <property type="term" value="P:cell adhesion"/>
    <property type="evidence" value="ECO:0007669"/>
    <property type="project" value="UniProtKB-KW"/>
</dbReference>
<dbReference type="GO" id="GO:0035641">
    <property type="term" value="P:locomotory exploration behavior"/>
    <property type="evidence" value="ECO:0000266"/>
    <property type="project" value="RGD"/>
</dbReference>
<dbReference type="CDD" id="cd00096">
    <property type="entry name" value="Ig"/>
    <property type="match status" value="1"/>
</dbReference>
<dbReference type="FunFam" id="2.60.40.10:FF:000013">
    <property type="entry name" value="cell adhesion molecule 1 isoform X1"/>
    <property type="match status" value="1"/>
</dbReference>
<dbReference type="FunFam" id="2.60.40.10:FF:000500">
    <property type="entry name" value="limbic system-associated membrane protein isoform X1"/>
    <property type="match status" value="1"/>
</dbReference>
<dbReference type="FunFam" id="2.60.40.10:FF:000113">
    <property type="entry name" value="Opioid-binding protein/cell adhesion molecule"/>
    <property type="match status" value="1"/>
</dbReference>
<dbReference type="Gene3D" id="2.60.40.10">
    <property type="entry name" value="Immunoglobulins"/>
    <property type="match status" value="3"/>
</dbReference>
<dbReference type="InterPro" id="IPR007110">
    <property type="entry name" value="Ig-like_dom"/>
</dbReference>
<dbReference type="InterPro" id="IPR036179">
    <property type="entry name" value="Ig-like_dom_sf"/>
</dbReference>
<dbReference type="InterPro" id="IPR013783">
    <property type="entry name" value="Ig-like_fold"/>
</dbReference>
<dbReference type="InterPro" id="IPR013098">
    <property type="entry name" value="Ig_I-set"/>
</dbReference>
<dbReference type="InterPro" id="IPR003599">
    <property type="entry name" value="Ig_sub"/>
</dbReference>
<dbReference type="InterPro" id="IPR003598">
    <property type="entry name" value="Ig_sub2"/>
</dbReference>
<dbReference type="InterPro" id="IPR050876">
    <property type="entry name" value="IgLON_domain"/>
</dbReference>
<dbReference type="PANTHER" id="PTHR42757">
    <property type="entry name" value="IGLON FAMILY OF IMMUNOGLOBULIN SUPERFAMILY-RELATED"/>
    <property type="match status" value="1"/>
</dbReference>
<dbReference type="PANTHER" id="PTHR42757:SF22">
    <property type="entry name" value="LIMBIC SYSTEM-ASSOCIATED MEMBRANE PROTEIN"/>
    <property type="match status" value="1"/>
</dbReference>
<dbReference type="Pfam" id="PF07679">
    <property type="entry name" value="I-set"/>
    <property type="match status" value="1"/>
</dbReference>
<dbReference type="Pfam" id="PF13927">
    <property type="entry name" value="Ig_3"/>
    <property type="match status" value="2"/>
</dbReference>
<dbReference type="SMART" id="SM00409">
    <property type="entry name" value="IG"/>
    <property type="match status" value="3"/>
</dbReference>
<dbReference type="SMART" id="SM00408">
    <property type="entry name" value="IGc2"/>
    <property type="match status" value="3"/>
</dbReference>
<dbReference type="SUPFAM" id="SSF48726">
    <property type="entry name" value="Immunoglobulin"/>
    <property type="match status" value="3"/>
</dbReference>
<dbReference type="PROSITE" id="PS50835">
    <property type="entry name" value="IG_LIKE"/>
    <property type="match status" value="3"/>
</dbReference>
<name>LSAMP_RAT</name>
<comment type="function">
    <text>Mediates selective neuronal growth and axon targeting. Contributes to the guidance of developing axons and remodeling of mature circuits in the limbic system. Essential for normal growth of the hippocampal mossy fiber projection.</text>
</comment>
<comment type="subcellular location">
    <subcellularLocation>
        <location>Cell membrane</location>
        <topology>Lipid-anchor</topology>
        <topology>GPI-anchor</topology>
    </subcellularLocation>
</comment>
<comment type="alternative products">
    <event type="alternative splicing"/>
    <isoform>
        <id>Q62813-1</id>
        <name>1</name>
        <sequence type="displayed"/>
    </isoform>
    <isoform>
        <id>Q62813-2</id>
        <name>2</name>
        <name>6C</name>
        <sequence type="described" ref="VSP_011601"/>
    </isoform>
</comment>
<comment type="tissue specificity">
    <text>Expressed mostly by neurons comprising limbic-associated cortical and subcortical regions that function in cognition, emotion, memory, and learning.</text>
</comment>
<comment type="developmental stage">
    <text>First detected at 15 dpc to 16 dpc, at stage 20 dpc it is detected in presumptive cortex, medial limbic areas of the thalamus and hypothalamus. In the adult, it is found in hypothalamus, perirhinal cortex, amygdala and medial thalamic region.</text>
</comment>
<comment type="miscellaneous">
    <molecule>Isoform 1</molecule>
    <text>GPI-anchored form.</text>
</comment>
<comment type="similarity">
    <text evidence="6">Belongs to the immunoglobulin superfamily. IgLON family.</text>
</comment>
<proteinExistence type="evidence at protein level"/>
<keyword id="KW-0025">Alternative splicing</keyword>
<keyword id="KW-0130">Cell adhesion</keyword>
<keyword id="KW-1003">Cell membrane</keyword>
<keyword id="KW-0903">Direct protein sequencing</keyword>
<keyword id="KW-1015">Disulfide bond</keyword>
<keyword id="KW-0325">Glycoprotein</keyword>
<keyword id="KW-0336">GPI-anchor</keyword>
<keyword id="KW-0393">Immunoglobulin domain</keyword>
<keyword id="KW-0449">Lipoprotein</keyword>
<keyword id="KW-0472">Membrane</keyword>
<keyword id="KW-0597">Phosphoprotein</keyword>
<keyword id="KW-1185">Reference proteome</keyword>
<keyword id="KW-0677">Repeat</keyword>
<keyword id="KW-0732">Signal</keyword>